<evidence type="ECO:0000255" key="1">
    <source>
        <dbReference type="HAMAP-Rule" id="MF_00086"/>
    </source>
</evidence>
<comment type="function">
    <text evidence="1">Catalyzes the formation of S-adenosylmethionine (AdoMet) from methionine and ATP. The overall synthetic reaction is composed of two sequential steps, AdoMet formation and the subsequent tripolyphosphate hydrolysis which occurs prior to release of AdoMet from the enzyme.</text>
</comment>
<comment type="catalytic activity">
    <reaction evidence="1">
        <text>L-methionine + ATP + H2O = S-adenosyl-L-methionine + phosphate + diphosphate</text>
        <dbReference type="Rhea" id="RHEA:21080"/>
        <dbReference type="ChEBI" id="CHEBI:15377"/>
        <dbReference type="ChEBI" id="CHEBI:30616"/>
        <dbReference type="ChEBI" id="CHEBI:33019"/>
        <dbReference type="ChEBI" id="CHEBI:43474"/>
        <dbReference type="ChEBI" id="CHEBI:57844"/>
        <dbReference type="ChEBI" id="CHEBI:59789"/>
        <dbReference type="EC" id="2.5.1.6"/>
    </reaction>
</comment>
<comment type="cofactor">
    <cofactor evidence="1">
        <name>Mg(2+)</name>
        <dbReference type="ChEBI" id="CHEBI:18420"/>
    </cofactor>
    <text evidence="1">Binds 2 divalent ions per subunit.</text>
</comment>
<comment type="cofactor">
    <cofactor evidence="1">
        <name>K(+)</name>
        <dbReference type="ChEBI" id="CHEBI:29103"/>
    </cofactor>
    <text evidence="1">Binds 1 potassium ion per subunit.</text>
</comment>
<comment type="pathway">
    <text evidence="1">Amino-acid biosynthesis; S-adenosyl-L-methionine biosynthesis; S-adenosyl-L-methionine from L-methionine: step 1/1.</text>
</comment>
<comment type="subunit">
    <text evidence="1">Homotetramer; dimer of dimers.</text>
</comment>
<comment type="subcellular location">
    <subcellularLocation>
        <location evidence="1">Cytoplasm</location>
    </subcellularLocation>
</comment>
<comment type="similarity">
    <text evidence="1">Belongs to the AdoMet synthase family.</text>
</comment>
<protein>
    <recommendedName>
        <fullName evidence="1">S-adenosylmethionine synthase</fullName>
        <shortName evidence="1">AdoMet synthase</shortName>
        <ecNumber evidence="1">2.5.1.6</ecNumber>
    </recommendedName>
    <alternativeName>
        <fullName evidence="1">MAT</fullName>
    </alternativeName>
    <alternativeName>
        <fullName evidence="1">Methionine adenosyltransferase</fullName>
    </alternativeName>
</protein>
<accession>B7H9C7</accession>
<keyword id="KW-0067">ATP-binding</keyword>
<keyword id="KW-0963">Cytoplasm</keyword>
<keyword id="KW-0460">Magnesium</keyword>
<keyword id="KW-0479">Metal-binding</keyword>
<keyword id="KW-0547">Nucleotide-binding</keyword>
<keyword id="KW-0554">One-carbon metabolism</keyword>
<keyword id="KW-0630">Potassium</keyword>
<keyword id="KW-0808">Transferase</keyword>
<organism>
    <name type="scientific">Bacillus cereus (strain B4264)</name>
    <dbReference type="NCBI Taxonomy" id="405532"/>
    <lineage>
        <taxon>Bacteria</taxon>
        <taxon>Bacillati</taxon>
        <taxon>Bacillota</taxon>
        <taxon>Bacilli</taxon>
        <taxon>Bacillales</taxon>
        <taxon>Bacillaceae</taxon>
        <taxon>Bacillus</taxon>
        <taxon>Bacillus cereus group</taxon>
    </lineage>
</organism>
<feature type="chain" id="PRO_1000196687" description="S-adenosylmethionine synthase">
    <location>
        <begin position="1"/>
        <end position="399"/>
    </location>
</feature>
<feature type="region of interest" description="Flexible loop" evidence="1">
    <location>
        <begin position="101"/>
        <end position="111"/>
    </location>
</feature>
<feature type="binding site" description="in other chain" evidence="1">
    <location>
        <position position="17"/>
    </location>
    <ligand>
        <name>ATP</name>
        <dbReference type="ChEBI" id="CHEBI:30616"/>
        <note>ligand shared between two neighboring subunits</note>
    </ligand>
</feature>
<feature type="binding site" evidence="1">
    <location>
        <position position="19"/>
    </location>
    <ligand>
        <name>Mg(2+)</name>
        <dbReference type="ChEBI" id="CHEBI:18420"/>
    </ligand>
</feature>
<feature type="binding site" evidence="1">
    <location>
        <position position="45"/>
    </location>
    <ligand>
        <name>K(+)</name>
        <dbReference type="ChEBI" id="CHEBI:29103"/>
    </ligand>
</feature>
<feature type="binding site" description="in other chain" evidence="1">
    <location>
        <position position="58"/>
    </location>
    <ligand>
        <name>L-methionine</name>
        <dbReference type="ChEBI" id="CHEBI:57844"/>
        <note>ligand shared between two neighboring subunits</note>
    </ligand>
</feature>
<feature type="binding site" description="in other chain" evidence="1">
    <location>
        <position position="101"/>
    </location>
    <ligand>
        <name>L-methionine</name>
        <dbReference type="ChEBI" id="CHEBI:57844"/>
        <note>ligand shared between two neighboring subunits</note>
    </ligand>
</feature>
<feature type="binding site" description="in other chain" evidence="1">
    <location>
        <begin position="177"/>
        <end position="179"/>
    </location>
    <ligand>
        <name>ATP</name>
        <dbReference type="ChEBI" id="CHEBI:30616"/>
        <note>ligand shared between two neighboring subunits</note>
    </ligand>
</feature>
<feature type="binding site" description="in other chain" evidence="1">
    <location>
        <begin position="244"/>
        <end position="245"/>
    </location>
    <ligand>
        <name>ATP</name>
        <dbReference type="ChEBI" id="CHEBI:30616"/>
        <note>ligand shared between two neighboring subunits</note>
    </ligand>
</feature>
<feature type="binding site" evidence="1">
    <location>
        <position position="253"/>
    </location>
    <ligand>
        <name>ATP</name>
        <dbReference type="ChEBI" id="CHEBI:30616"/>
        <note>ligand shared between two neighboring subunits</note>
    </ligand>
</feature>
<feature type="binding site" evidence="1">
    <location>
        <position position="253"/>
    </location>
    <ligand>
        <name>L-methionine</name>
        <dbReference type="ChEBI" id="CHEBI:57844"/>
        <note>ligand shared between two neighboring subunits</note>
    </ligand>
</feature>
<feature type="binding site" description="in other chain" evidence="1">
    <location>
        <begin position="259"/>
        <end position="260"/>
    </location>
    <ligand>
        <name>ATP</name>
        <dbReference type="ChEBI" id="CHEBI:30616"/>
        <note>ligand shared between two neighboring subunits</note>
    </ligand>
</feature>
<feature type="binding site" evidence="1">
    <location>
        <position position="276"/>
    </location>
    <ligand>
        <name>ATP</name>
        <dbReference type="ChEBI" id="CHEBI:30616"/>
        <note>ligand shared between two neighboring subunits</note>
    </ligand>
</feature>
<feature type="binding site" evidence="1">
    <location>
        <position position="280"/>
    </location>
    <ligand>
        <name>ATP</name>
        <dbReference type="ChEBI" id="CHEBI:30616"/>
        <note>ligand shared between two neighboring subunits</note>
    </ligand>
</feature>
<feature type="binding site" description="in other chain" evidence="1">
    <location>
        <position position="284"/>
    </location>
    <ligand>
        <name>L-methionine</name>
        <dbReference type="ChEBI" id="CHEBI:57844"/>
        <note>ligand shared between two neighboring subunits</note>
    </ligand>
</feature>
<name>METK_BACC4</name>
<proteinExistence type="inferred from homology"/>
<gene>
    <name evidence="1" type="primary">metK</name>
    <name type="ordered locus">BCB4264_A4877</name>
</gene>
<reference key="1">
    <citation type="submission" date="2008-10" db="EMBL/GenBank/DDBJ databases">
        <title>Genome sequence of Bacillus cereus B4264.</title>
        <authorList>
            <person name="Dodson R.J."/>
            <person name="Durkin A.S."/>
            <person name="Rosovitz M.J."/>
            <person name="Rasko D.A."/>
            <person name="Hoffmaster A."/>
            <person name="Ravel J."/>
            <person name="Sutton G."/>
        </authorList>
    </citation>
    <scope>NUCLEOTIDE SEQUENCE [LARGE SCALE GENOMIC DNA]</scope>
    <source>
        <strain>B4264</strain>
    </source>
</reference>
<dbReference type="EC" id="2.5.1.6" evidence="1"/>
<dbReference type="EMBL" id="CP001176">
    <property type="protein sequence ID" value="ACK59534.1"/>
    <property type="molecule type" value="Genomic_DNA"/>
</dbReference>
<dbReference type="RefSeq" id="WP_000163123.1">
    <property type="nucleotide sequence ID" value="NZ_VEHB01000005.1"/>
</dbReference>
<dbReference type="SMR" id="B7H9C7"/>
<dbReference type="GeneID" id="93006331"/>
<dbReference type="KEGG" id="bcb:BCB4264_A4877"/>
<dbReference type="HOGENOM" id="CLU_041802_1_1_9"/>
<dbReference type="UniPathway" id="UPA00315">
    <property type="reaction ID" value="UER00080"/>
</dbReference>
<dbReference type="Proteomes" id="UP000007096">
    <property type="component" value="Chromosome"/>
</dbReference>
<dbReference type="GO" id="GO:0005737">
    <property type="term" value="C:cytoplasm"/>
    <property type="evidence" value="ECO:0007669"/>
    <property type="project" value="UniProtKB-SubCell"/>
</dbReference>
<dbReference type="GO" id="GO:0005524">
    <property type="term" value="F:ATP binding"/>
    <property type="evidence" value="ECO:0007669"/>
    <property type="project" value="UniProtKB-UniRule"/>
</dbReference>
<dbReference type="GO" id="GO:0000287">
    <property type="term" value="F:magnesium ion binding"/>
    <property type="evidence" value="ECO:0007669"/>
    <property type="project" value="UniProtKB-UniRule"/>
</dbReference>
<dbReference type="GO" id="GO:0004478">
    <property type="term" value="F:methionine adenosyltransferase activity"/>
    <property type="evidence" value="ECO:0007669"/>
    <property type="project" value="UniProtKB-UniRule"/>
</dbReference>
<dbReference type="GO" id="GO:0006730">
    <property type="term" value="P:one-carbon metabolic process"/>
    <property type="evidence" value="ECO:0007669"/>
    <property type="project" value="UniProtKB-KW"/>
</dbReference>
<dbReference type="GO" id="GO:0006556">
    <property type="term" value="P:S-adenosylmethionine biosynthetic process"/>
    <property type="evidence" value="ECO:0007669"/>
    <property type="project" value="UniProtKB-UniRule"/>
</dbReference>
<dbReference type="CDD" id="cd18079">
    <property type="entry name" value="S-AdoMet_synt"/>
    <property type="match status" value="1"/>
</dbReference>
<dbReference type="FunFam" id="3.30.300.10:FF:000003">
    <property type="entry name" value="S-adenosylmethionine synthase"/>
    <property type="match status" value="1"/>
</dbReference>
<dbReference type="FunFam" id="3.30.300.10:FF:000004">
    <property type="entry name" value="S-adenosylmethionine synthase"/>
    <property type="match status" value="1"/>
</dbReference>
<dbReference type="Gene3D" id="3.30.300.10">
    <property type="match status" value="3"/>
</dbReference>
<dbReference type="HAMAP" id="MF_00086">
    <property type="entry name" value="S_AdoMet_synth1"/>
    <property type="match status" value="1"/>
</dbReference>
<dbReference type="InterPro" id="IPR022631">
    <property type="entry name" value="ADOMET_SYNTHASE_CS"/>
</dbReference>
<dbReference type="InterPro" id="IPR022630">
    <property type="entry name" value="S-AdoMet_synt_C"/>
</dbReference>
<dbReference type="InterPro" id="IPR022629">
    <property type="entry name" value="S-AdoMet_synt_central"/>
</dbReference>
<dbReference type="InterPro" id="IPR022628">
    <property type="entry name" value="S-AdoMet_synt_N"/>
</dbReference>
<dbReference type="InterPro" id="IPR002133">
    <property type="entry name" value="S-AdoMet_synthetase"/>
</dbReference>
<dbReference type="InterPro" id="IPR022636">
    <property type="entry name" value="S-AdoMet_synthetase_sfam"/>
</dbReference>
<dbReference type="NCBIfam" id="TIGR01034">
    <property type="entry name" value="metK"/>
    <property type="match status" value="1"/>
</dbReference>
<dbReference type="PANTHER" id="PTHR11964">
    <property type="entry name" value="S-ADENOSYLMETHIONINE SYNTHETASE"/>
    <property type="match status" value="1"/>
</dbReference>
<dbReference type="Pfam" id="PF02773">
    <property type="entry name" value="S-AdoMet_synt_C"/>
    <property type="match status" value="1"/>
</dbReference>
<dbReference type="Pfam" id="PF02772">
    <property type="entry name" value="S-AdoMet_synt_M"/>
    <property type="match status" value="1"/>
</dbReference>
<dbReference type="Pfam" id="PF00438">
    <property type="entry name" value="S-AdoMet_synt_N"/>
    <property type="match status" value="1"/>
</dbReference>
<dbReference type="PIRSF" id="PIRSF000497">
    <property type="entry name" value="MAT"/>
    <property type="match status" value="1"/>
</dbReference>
<dbReference type="SUPFAM" id="SSF55973">
    <property type="entry name" value="S-adenosylmethionine synthetase"/>
    <property type="match status" value="3"/>
</dbReference>
<dbReference type="PROSITE" id="PS00376">
    <property type="entry name" value="ADOMET_SYNTHASE_1"/>
    <property type="match status" value="1"/>
</dbReference>
<dbReference type="PROSITE" id="PS00377">
    <property type="entry name" value="ADOMET_SYNTHASE_2"/>
    <property type="match status" value="1"/>
</dbReference>
<sequence>MTKKRHLFTSESVTEGHPDKICDQISDSILDAILSKDANARVACETTVTTGLVLVAGEITTSTYVDIPKIVRETIQGIGYTRAKYGFDAETCAVLTSIDEQSADIAMGVDQALEAREGQMTDAEIEAIGAGDQGLMFGFACNETQELMPLPISLAHKLARRLTEVRKDDTLSYLRPDGKTQVTVEYDENGKPVRVDTIVISTQHHPDVTWEEIDRDLKEHVIKAVVPAELMDGETKFFINPTGRFVIGGPQGDAGLTGRKIIVDTYGGYARHGGGAFSGKDATKVDRSAAYAARYVAKNIVAAGLAEKAEVQLAYAIGVAQPVSISVDTFGTGKVSEDVLVELVRNNFDLRPAGIIKMLDLRRPIYKQTAAYGHFGRTDVDLSWERTDKAAALKEQAGL</sequence>